<evidence type="ECO:0000255" key="1">
    <source>
        <dbReference type="HAMAP-Rule" id="MF_00023"/>
    </source>
</evidence>
<evidence type="ECO:0000256" key="2">
    <source>
        <dbReference type="SAM" id="MobiDB-lite"/>
    </source>
</evidence>
<gene>
    <name evidence="1" type="primary">smpB</name>
    <name type="ordered locus">BOV_0641</name>
</gene>
<feature type="chain" id="PRO_1000002009" description="SsrA-binding protein">
    <location>
        <begin position="1"/>
        <end position="158"/>
    </location>
</feature>
<feature type="region of interest" description="Disordered" evidence="2">
    <location>
        <begin position="131"/>
        <end position="158"/>
    </location>
</feature>
<feature type="compositionally biased region" description="Basic and acidic residues" evidence="2">
    <location>
        <begin position="136"/>
        <end position="158"/>
    </location>
</feature>
<keyword id="KW-0963">Cytoplasm</keyword>
<keyword id="KW-0694">RNA-binding</keyword>
<reference key="1">
    <citation type="journal article" date="2009" name="PLoS ONE">
        <title>Genome degradation in Brucella ovis corresponds with narrowing of its host range and tissue tropism.</title>
        <authorList>
            <person name="Tsolis R.M."/>
            <person name="Seshadri R."/>
            <person name="Santos R.L."/>
            <person name="Sangari F.J."/>
            <person name="Lobo J.M."/>
            <person name="de Jong M.F."/>
            <person name="Ren Q."/>
            <person name="Myers G."/>
            <person name="Brinkac L.M."/>
            <person name="Nelson W.C."/>
            <person name="Deboy R.T."/>
            <person name="Angiuoli S."/>
            <person name="Khouri H."/>
            <person name="Dimitrov G."/>
            <person name="Robinson J.R."/>
            <person name="Mulligan S."/>
            <person name="Walker R.L."/>
            <person name="Elzer P.E."/>
            <person name="Hassan K.A."/>
            <person name="Paulsen I.T."/>
        </authorList>
    </citation>
    <scope>NUCLEOTIDE SEQUENCE [LARGE SCALE GENOMIC DNA]</scope>
    <source>
        <strain>ATCC 25840 / 63/290 / NCTC 10512</strain>
    </source>
</reference>
<comment type="function">
    <text evidence="1">Required for rescue of stalled ribosomes mediated by trans-translation. Binds to transfer-messenger RNA (tmRNA), required for stable association of tmRNA with ribosomes. tmRNA and SmpB together mimic tRNA shape, replacing the anticodon stem-loop with SmpB. tmRNA is encoded by the ssrA gene; the 2 termini fold to resemble tRNA(Ala) and it encodes a 'tag peptide', a short internal open reading frame. During trans-translation Ala-aminoacylated tmRNA acts like a tRNA, entering the A-site of stalled ribosomes, displacing the stalled mRNA. The ribosome then switches to translate the ORF on the tmRNA; the nascent peptide is terminated with the 'tag peptide' encoded by the tmRNA and targeted for degradation. The ribosome is freed to recommence translation, which seems to be the essential function of trans-translation.</text>
</comment>
<comment type="subcellular location">
    <subcellularLocation>
        <location evidence="1">Cytoplasm</location>
    </subcellularLocation>
    <text evidence="1">The tmRNA-SmpB complex associates with stalled 70S ribosomes.</text>
</comment>
<comment type="similarity">
    <text evidence="1">Belongs to the SmpB family.</text>
</comment>
<proteinExistence type="inferred from homology"/>
<dbReference type="EMBL" id="CP000708">
    <property type="protein sequence ID" value="ABQ60423.1"/>
    <property type="molecule type" value="Genomic_DNA"/>
</dbReference>
<dbReference type="RefSeq" id="WP_006011981.1">
    <property type="nucleotide sequence ID" value="NC_009505.1"/>
</dbReference>
<dbReference type="SMR" id="A5VPI6"/>
<dbReference type="GeneID" id="45124099"/>
<dbReference type="KEGG" id="bov:BOV_0641"/>
<dbReference type="HOGENOM" id="CLU_108953_0_1_5"/>
<dbReference type="PhylomeDB" id="A5VPI6"/>
<dbReference type="Proteomes" id="UP000006383">
    <property type="component" value="Chromosome I"/>
</dbReference>
<dbReference type="GO" id="GO:0005829">
    <property type="term" value="C:cytosol"/>
    <property type="evidence" value="ECO:0007669"/>
    <property type="project" value="TreeGrafter"/>
</dbReference>
<dbReference type="GO" id="GO:0003723">
    <property type="term" value="F:RNA binding"/>
    <property type="evidence" value="ECO:0007669"/>
    <property type="project" value="UniProtKB-UniRule"/>
</dbReference>
<dbReference type="GO" id="GO:0070929">
    <property type="term" value="P:trans-translation"/>
    <property type="evidence" value="ECO:0007669"/>
    <property type="project" value="UniProtKB-UniRule"/>
</dbReference>
<dbReference type="CDD" id="cd09294">
    <property type="entry name" value="SmpB"/>
    <property type="match status" value="1"/>
</dbReference>
<dbReference type="Gene3D" id="2.40.280.10">
    <property type="match status" value="1"/>
</dbReference>
<dbReference type="HAMAP" id="MF_00023">
    <property type="entry name" value="SmpB"/>
    <property type="match status" value="1"/>
</dbReference>
<dbReference type="InterPro" id="IPR023620">
    <property type="entry name" value="SmpB"/>
</dbReference>
<dbReference type="InterPro" id="IPR000037">
    <property type="entry name" value="SsrA-bd_prot"/>
</dbReference>
<dbReference type="InterPro" id="IPR020081">
    <property type="entry name" value="SsrA-bd_prot_CS"/>
</dbReference>
<dbReference type="NCBIfam" id="NF003843">
    <property type="entry name" value="PRK05422.1"/>
    <property type="match status" value="1"/>
</dbReference>
<dbReference type="NCBIfam" id="TIGR00086">
    <property type="entry name" value="smpB"/>
    <property type="match status" value="1"/>
</dbReference>
<dbReference type="PANTHER" id="PTHR30308:SF2">
    <property type="entry name" value="SSRA-BINDING PROTEIN"/>
    <property type="match status" value="1"/>
</dbReference>
<dbReference type="PANTHER" id="PTHR30308">
    <property type="entry name" value="TMRNA-BINDING COMPONENT OF TRANS-TRANSLATION TAGGING COMPLEX"/>
    <property type="match status" value="1"/>
</dbReference>
<dbReference type="Pfam" id="PF01668">
    <property type="entry name" value="SmpB"/>
    <property type="match status" value="1"/>
</dbReference>
<dbReference type="SUPFAM" id="SSF74982">
    <property type="entry name" value="Small protein B (SmpB)"/>
    <property type="match status" value="1"/>
</dbReference>
<dbReference type="PROSITE" id="PS01317">
    <property type="entry name" value="SSRP"/>
    <property type="match status" value="1"/>
</dbReference>
<accession>A5VPI6</accession>
<sequence length="158" mass="18600">MNKPKNSPARKMIAENRKARFNFEILDTLEAGLVLTGTEVKSLRANQANIAESYASFEDGEFWLINSYIPEYTQGNRFNHEPRRLRKLLVSRWEMSRLFNSVSREGMTVVPLKLYFNDRGRAKLELALARGKKTHDKRETEKKRDWNREKARLLRDRG</sequence>
<name>SSRP_BRUO2</name>
<protein>
    <recommendedName>
        <fullName evidence="1">SsrA-binding protein</fullName>
    </recommendedName>
    <alternativeName>
        <fullName evidence="1">Small protein B</fullName>
    </alternativeName>
</protein>
<organism>
    <name type="scientific">Brucella ovis (strain ATCC 25840 / 63/290 / NCTC 10512)</name>
    <dbReference type="NCBI Taxonomy" id="444178"/>
    <lineage>
        <taxon>Bacteria</taxon>
        <taxon>Pseudomonadati</taxon>
        <taxon>Pseudomonadota</taxon>
        <taxon>Alphaproteobacteria</taxon>
        <taxon>Hyphomicrobiales</taxon>
        <taxon>Brucellaceae</taxon>
        <taxon>Brucella/Ochrobactrum group</taxon>
        <taxon>Brucella</taxon>
    </lineage>
</organism>